<comment type="function">
    <text evidence="1">Could be a nuclease involved in processing of the 5'-end of pre-16S rRNA.</text>
</comment>
<comment type="subcellular location">
    <subcellularLocation>
        <location evidence="1">Cytoplasm</location>
    </subcellularLocation>
</comment>
<comment type="similarity">
    <text evidence="1">Belongs to the YqgF nuclease family.</text>
</comment>
<evidence type="ECO:0000255" key="1">
    <source>
        <dbReference type="HAMAP-Rule" id="MF_00651"/>
    </source>
</evidence>
<reference key="1">
    <citation type="journal article" date="2006" name="Proc. Natl. Acad. Sci. U.S.A.">
        <title>Comparative genomics of the lactic acid bacteria.</title>
        <authorList>
            <person name="Makarova K.S."/>
            <person name="Slesarev A."/>
            <person name="Wolf Y.I."/>
            <person name="Sorokin A."/>
            <person name="Mirkin B."/>
            <person name="Koonin E.V."/>
            <person name="Pavlov A."/>
            <person name="Pavlova N."/>
            <person name="Karamychev V."/>
            <person name="Polouchine N."/>
            <person name="Shakhova V."/>
            <person name="Grigoriev I."/>
            <person name="Lou Y."/>
            <person name="Rohksar D."/>
            <person name="Lucas S."/>
            <person name="Huang K."/>
            <person name="Goodstein D.M."/>
            <person name="Hawkins T."/>
            <person name="Plengvidhya V."/>
            <person name="Welker D."/>
            <person name="Hughes J."/>
            <person name="Goh Y."/>
            <person name="Benson A."/>
            <person name="Baldwin K."/>
            <person name="Lee J.-H."/>
            <person name="Diaz-Muniz I."/>
            <person name="Dosti B."/>
            <person name="Smeianov V."/>
            <person name="Wechter W."/>
            <person name="Barabote R."/>
            <person name="Lorca G."/>
            <person name="Altermann E."/>
            <person name="Barrangou R."/>
            <person name="Ganesan B."/>
            <person name="Xie Y."/>
            <person name="Rawsthorne H."/>
            <person name="Tamir D."/>
            <person name="Parker C."/>
            <person name="Breidt F."/>
            <person name="Broadbent J.R."/>
            <person name="Hutkins R."/>
            <person name="O'Sullivan D."/>
            <person name="Steele J."/>
            <person name="Unlu G."/>
            <person name="Saier M.H. Jr."/>
            <person name="Klaenhammer T."/>
            <person name="Richardson P."/>
            <person name="Kozyavkin S."/>
            <person name="Weimer B.C."/>
            <person name="Mills D.A."/>
        </authorList>
    </citation>
    <scope>NUCLEOTIDE SEQUENCE [LARGE SCALE GENOMIC DNA]</scope>
    <source>
        <strain>ATCC 33323 / DSM 20243 / BCRC 14619 / CIP 102991 / JCM 1131 / KCTC 3163 / NCIMB 11718 / NCTC 13722 / AM63</strain>
    </source>
</reference>
<gene>
    <name type="ordered locus">LGAS_0423</name>
</gene>
<sequence length="143" mass="16206">MRLLGLDVGSKTVGVAISDPLGITAQELETIKIDESKFSFGMRQIRKLVRKYDVEGFVLGLPKNMDGSSGHSVERSKQYGERLKEKFDLPVHYMDERLTTVQADRILVQEAGVHDRVERKKVIDQMAAVLILQSYLEATRKDK</sequence>
<dbReference type="EC" id="3.1.-.-" evidence="1"/>
<dbReference type="EMBL" id="CP000413">
    <property type="protein sequence ID" value="ABJ59828.1"/>
    <property type="molecule type" value="Genomic_DNA"/>
</dbReference>
<dbReference type="SMR" id="Q045P4"/>
<dbReference type="GeneID" id="29640014"/>
<dbReference type="KEGG" id="lga:LGAS_0423"/>
<dbReference type="HOGENOM" id="CLU_098240_2_0_9"/>
<dbReference type="BioCyc" id="LGAS324831:G1G6Y-423-MONOMER"/>
<dbReference type="Proteomes" id="UP000000664">
    <property type="component" value="Chromosome"/>
</dbReference>
<dbReference type="GO" id="GO:0005829">
    <property type="term" value="C:cytosol"/>
    <property type="evidence" value="ECO:0007669"/>
    <property type="project" value="TreeGrafter"/>
</dbReference>
<dbReference type="GO" id="GO:0004518">
    <property type="term" value="F:nuclease activity"/>
    <property type="evidence" value="ECO:0007669"/>
    <property type="project" value="UniProtKB-KW"/>
</dbReference>
<dbReference type="GO" id="GO:0000967">
    <property type="term" value="P:rRNA 5'-end processing"/>
    <property type="evidence" value="ECO:0007669"/>
    <property type="project" value="UniProtKB-UniRule"/>
</dbReference>
<dbReference type="CDD" id="cd16964">
    <property type="entry name" value="YqgF"/>
    <property type="match status" value="1"/>
</dbReference>
<dbReference type="Gene3D" id="3.30.420.140">
    <property type="entry name" value="YqgF/RNase H-like domain"/>
    <property type="match status" value="1"/>
</dbReference>
<dbReference type="HAMAP" id="MF_00651">
    <property type="entry name" value="Nuclease_YqgF"/>
    <property type="match status" value="1"/>
</dbReference>
<dbReference type="InterPro" id="IPR012337">
    <property type="entry name" value="RNaseH-like_sf"/>
</dbReference>
<dbReference type="InterPro" id="IPR005227">
    <property type="entry name" value="YqgF"/>
</dbReference>
<dbReference type="InterPro" id="IPR006641">
    <property type="entry name" value="YqgF/RNaseH-like_dom"/>
</dbReference>
<dbReference type="InterPro" id="IPR037027">
    <property type="entry name" value="YqgF/RNaseH-like_dom_sf"/>
</dbReference>
<dbReference type="NCBIfam" id="TIGR00250">
    <property type="entry name" value="RNAse_H_YqgF"/>
    <property type="match status" value="1"/>
</dbReference>
<dbReference type="PANTHER" id="PTHR33317">
    <property type="entry name" value="POLYNUCLEOTIDYL TRANSFERASE, RIBONUCLEASE H-LIKE SUPERFAMILY PROTEIN"/>
    <property type="match status" value="1"/>
</dbReference>
<dbReference type="PANTHER" id="PTHR33317:SF4">
    <property type="entry name" value="POLYNUCLEOTIDYL TRANSFERASE, RIBONUCLEASE H-LIKE SUPERFAMILY PROTEIN"/>
    <property type="match status" value="1"/>
</dbReference>
<dbReference type="Pfam" id="PF03652">
    <property type="entry name" value="RuvX"/>
    <property type="match status" value="1"/>
</dbReference>
<dbReference type="SMART" id="SM00732">
    <property type="entry name" value="YqgFc"/>
    <property type="match status" value="1"/>
</dbReference>
<dbReference type="SUPFAM" id="SSF53098">
    <property type="entry name" value="Ribonuclease H-like"/>
    <property type="match status" value="1"/>
</dbReference>
<keyword id="KW-0963">Cytoplasm</keyword>
<keyword id="KW-0378">Hydrolase</keyword>
<keyword id="KW-0540">Nuclease</keyword>
<keyword id="KW-0690">Ribosome biogenesis</keyword>
<proteinExistence type="inferred from homology"/>
<protein>
    <recommendedName>
        <fullName evidence="1">Putative pre-16S rRNA nuclease</fullName>
        <ecNumber evidence="1">3.1.-.-</ecNumber>
    </recommendedName>
</protein>
<feature type="chain" id="PRO_1000061529" description="Putative pre-16S rRNA nuclease">
    <location>
        <begin position="1"/>
        <end position="143"/>
    </location>
</feature>
<organism>
    <name type="scientific">Lactobacillus gasseri (strain ATCC 33323 / DSM 20243 / BCRC 14619 / CIP 102991 / JCM 1131 / KCTC 3163 / NCIMB 11718 / NCTC 13722 / AM63)</name>
    <dbReference type="NCBI Taxonomy" id="324831"/>
    <lineage>
        <taxon>Bacteria</taxon>
        <taxon>Bacillati</taxon>
        <taxon>Bacillota</taxon>
        <taxon>Bacilli</taxon>
        <taxon>Lactobacillales</taxon>
        <taxon>Lactobacillaceae</taxon>
        <taxon>Lactobacillus</taxon>
    </lineage>
</organism>
<name>YQGF_LACGA</name>
<accession>Q045P4</accession>